<reference key="1">
    <citation type="journal article" date="1995" name="Genetics">
        <title>Genetic characterization and cloning of mothers against dpp, a gene required for decapentaplegic function in Drosophila melanogaster.</title>
        <authorList>
            <person name="Sekelsky J.J."/>
            <person name="Newfeld S.J."/>
            <person name="Raftery L.A."/>
            <person name="Chartoff E.H."/>
            <person name="Gelbart W.M."/>
        </authorList>
    </citation>
    <scope>NUCLEOTIDE SEQUENCE [MRNA]</scope>
</reference>
<reference key="2">
    <citation type="journal article" date="1996" name="Proc. Natl. Acad. Sci. U.S.A.">
        <title>Caenorhabditis elegans genes sma-2, sma-3, and sma-4 define a conserved family of transforming growth factor beta pathway components.</title>
        <authorList>
            <person name="Savage C."/>
            <person name="Das P."/>
            <person name="Finelli A.L."/>
            <person name="Townsend S.R."/>
            <person name="Sun C.-Y."/>
            <person name="Baird S.E."/>
            <person name="Padgett R.W."/>
        </authorList>
    </citation>
    <scope>NUCLEOTIDE SEQUENCE [MRNA]</scope>
    <source>
        <strain>Bristol N2</strain>
    </source>
</reference>
<reference key="3">
    <citation type="journal article" date="1994" name="Nature">
        <title>2.2 Mb of contiguous nucleotide sequence from chromosome III of C. elegans.</title>
        <authorList>
            <person name="Wilson R."/>
            <person name="Ainscough R."/>
            <person name="Anderson K."/>
            <person name="Baynes C."/>
            <person name="Berks M."/>
            <person name="Bonfield J."/>
            <person name="Burton J."/>
            <person name="Connell M."/>
            <person name="Copsey T."/>
            <person name="Cooper J."/>
            <person name="Coulson A."/>
            <person name="Craxton M."/>
            <person name="Dear S."/>
            <person name="Du Z."/>
            <person name="Durbin R."/>
            <person name="Favello A."/>
            <person name="Fraser A."/>
            <person name="Fulton L."/>
            <person name="Gardner A."/>
            <person name="Green P."/>
            <person name="Hawkins T."/>
            <person name="Hillier L."/>
            <person name="Jier M."/>
            <person name="Johnston L."/>
            <person name="Jones M."/>
            <person name="Kershaw J."/>
            <person name="Kirsten J."/>
            <person name="Laisster N."/>
            <person name="Latreille P."/>
            <person name="Lightning J."/>
            <person name="Lloyd C."/>
            <person name="Mortimore B."/>
            <person name="O'Callaghan M."/>
            <person name="Parsons J."/>
            <person name="Percy C."/>
            <person name="Rifken L."/>
            <person name="Roopra A."/>
            <person name="Saunders D."/>
            <person name="Shownkeen R."/>
            <person name="Sims M."/>
            <person name="Smaldon N."/>
            <person name="Smith A."/>
            <person name="Smith M."/>
            <person name="Sonnhammer E."/>
            <person name="Staden R."/>
            <person name="Sulston J."/>
            <person name="Thierry-Mieg J."/>
            <person name="Thomas K."/>
            <person name="Vaudin M."/>
            <person name="Vaughan K."/>
            <person name="Waterston R."/>
            <person name="Watson A."/>
            <person name="Weinstock L."/>
            <person name="Wilkinson-Sproat J."/>
            <person name="Wohldman P."/>
        </authorList>
    </citation>
    <scope>NUCLEOTIDE SEQUENCE [LARGE SCALE GENOMIC DNA]</scope>
    <source>
        <strain>Bristol N2</strain>
    </source>
</reference>
<reference key="4">
    <citation type="journal article" date="1998" name="Science">
        <title>Genome sequence of the nematode C. elegans: a platform for investigating biology.</title>
        <authorList>
            <consortium name="The C. elegans sequencing consortium"/>
        </authorList>
    </citation>
    <scope>NUCLEOTIDE SEQUENCE [LARGE SCALE GENOMIC DNA]</scope>
    <source>
        <strain>Bristol N2</strain>
    </source>
</reference>
<reference key="5">
    <citation type="journal article" date="2011" name="PLoS Genet.">
        <title>A bow-tie genetic architecture for morphogenesis suggested by a genome-wide RNAi screen in Caenorhabditis elegans.</title>
        <authorList>
            <person name="Nelson M.D."/>
            <person name="Zhou E."/>
            <person name="Kiontke K."/>
            <person name="Fradin H."/>
            <person name="Maldonado G."/>
            <person name="Martin D."/>
            <person name="Shah K."/>
            <person name="Fitch D.H."/>
        </authorList>
    </citation>
    <scope>FUNCTION</scope>
    <scope>DISRUPTION PHENOTYPE</scope>
</reference>
<evidence type="ECO:0000250" key="1"/>
<evidence type="ECO:0000255" key="2">
    <source>
        <dbReference type="PROSITE-ProRule" id="PRU00438"/>
    </source>
</evidence>
<evidence type="ECO:0000255" key="3">
    <source>
        <dbReference type="PROSITE-ProRule" id="PRU00439"/>
    </source>
</evidence>
<evidence type="ECO:0000269" key="4">
    <source>
    </source>
</evidence>
<evidence type="ECO:0000305" key="5"/>
<evidence type="ECO:0000312" key="6">
    <source>
        <dbReference type="WormBase" id="ZK370.2a"/>
    </source>
</evidence>
<dbReference type="EMBL" id="U10327">
    <property type="protein sequence ID" value="AAC46583.1"/>
    <property type="molecule type" value="mRNA"/>
</dbReference>
<dbReference type="EMBL" id="U34778">
    <property type="protein sequence ID" value="AAA97606.1"/>
    <property type="molecule type" value="mRNA"/>
</dbReference>
<dbReference type="EMBL" id="BX284603">
    <property type="protein sequence ID" value="CCD61720.1"/>
    <property type="molecule type" value="Genomic_DNA"/>
</dbReference>
<dbReference type="PIR" id="B88538">
    <property type="entry name" value="B88538"/>
</dbReference>
<dbReference type="PIR" id="S55018">
    <property type="entry name" value="S55018"/>
</dbReference>
<dbReference type="RefSeq" id="NP_001370321.1">
    <property type="nucleotide sequence ID" value="NM_001382944.1"/>
</dbReference>
<dbReference type="RefSeq" id="NP_498931.2">
    <property type="nucleotide sequence ID" value="NM_066530.4"/>
</dbReference>
<dbReference type="SMR" id="Q02330"/>
<dbReference type="BioGRID" id="41432">
    <property type="interactions" value="8"/>
</dbReference>
<dbReference type="DIP" id="DIP-27082N"/>
<dbReference type="FunCoup" id="Q02330">
    <property type="interactions" value="2122"/>
</dbReference>
<dbReference type="IntAct" id="Q02330">
    <property type="interactions" value="2"/>
</dbReference>
<dbReference type="STRING" id="6239.ZK370.2.1"/>
<dbReference type="PaxDb" id="6239-ZK370.2"/>
<dbReference type="PeptideAtlas" id="Q02330"/>
<dbReference type="EnsemblMetazoa" id="ZK370.2a.1">
    <property type="protein sequence ID" value="ZK370.2a.1"/>
    <property type="gene ID" value="WBGene00004856"/>
</dbReference>
<dbReference type="EnsemblMetazoa" id="ZK370.2a.2">
    <property type="protein sequence ID" value="ZK370.2a.2"/>
    <property type="gene ID" value="WBGene00004856"/>
</dbReference>
<dbReference type="GeneID" id="176229"/>
<dbReference type="UCSC" id="ZK370.2">
    <property type="organism name" value="c. elegans"/>
</dbReference>
<dbReference type="AGR" id="WB:WBGene00004856"/>
<dbReference type="WormBase" id="ZK370.2a">
    <property type="protein sequence ID" value="CE33015"/>
    <property type="gene ID" value="WBGene00004856"/>
    <property type="gene designation" value="sma-2"/>
</dbReference>
<dbReference type="eggNOG" id="KOG3701">
    <property type="taxonomic scope" value="Eukaryota"/>
</dbReference>
<dbReference type="GeneTree" id="ENSGT00940000163092"/>
<dbReference type="HOGENOM" id="CLU_026736_0_2_1"/>
<dbReference type="InParanoid" id="Q02330"/>
<dbReference type="OMA" id="ENNNRAD"/>
<dbReference type="OrthoDB" id="5794312at2759"/>
<dbReference type="PhylomeDB" id="Q02330"/>
<dbReference type="Reactome" id="R-CEL-201451">
    <property type="pathway name" value="Signaling by BMP"/>
</dbReference>
<dbReference type="Reactome" id="R-CEL-5689880">
    <property type="pathway name" value="Ub-specific processing proteases"/>
</dbReference>
<dbReference type="Reactome" id="R-CEL-8941326">
    <property type="pathway name" value="RUNX2 regulates bone development"/>
</dbReference>
<dbReference type="PRO" id="PR:Q02330"/>
<dbReference type="Proteomes" id="UP000001940">
    <property type="component" value="Chromosome III"/>
</dbReference>
<dbReference type="Bgee" id="WBGene00004856">
    <property type="expression patterns" value="Expressed in larva and 3 other cell types or tissues"/>
</dbReference>
<dbReference type="ExpressionAtlas" id="Q02330">
    <property type="expression patterns" value="baseline and differential"/>
</dbReference>
<dbReference type="GO" id="GO:0005737">
    <property type="term" value="C:cytoplasm"/>
    <property type="evidence" value="ECO:0007669"/>
    <property type="project" value="UniProtKB-SubCell"/>
</dbReference>
<dbReference type="GO" id="GO:0071144">
    <property type="term" value="C:heteromeric SMAD protein complex"/>
    <property type="evidence" value="ECO:0000318"/>
    <property type="project" value="GO_Central"/>
</dbReference>
<dbReference type="GO" id="GO:0000981">
    <property type="term" value="F:DNA-binding transcription factor activity, RNA polymerase II-specific"/>
    <property type="evidence" value="ECO:0000318"/>
    <property type="project" value="GO_Central"/>
</dbReference>
<dbReference type="GO" id="GO:0070411">
    <property type="term" value="F:I-SMAD binding"/>
    <property type="evidence" value="ECO:0000318"/>
    <property type="project" value="GO_Central"/>
</dbReference>
<dbReference type="GO" id="GO:0046872">
    <property type="term" value="F:metal ion binding"/>
    <property type="evidence" value="ECO:0007669"/>
    <property type="project" value="UniProtKB-KW"/>
</dbReference>
<dbReference type="GO" id="GO:0000978">
    <property type="term" value="F:RNA polymerase II cis-regulatory region sequence-specific DNA binding"/>
    <property type="evidence" value="ECO:0000318"/>
    <property type="project" value="GO_Central"/>
</dbReference>
<dbReference type="GO" id="GO:0009653">
    <property type="term" value="P:anatomical structure morphogenesis"/>
    <property type="evidence" value="ECO:0000318"/>
    <property type="project" value="GO_Central"/>
</dbReference>
<dbReference type="GO" id="GO:0030509">
    <property type="term" value="P:BMP signaling pathway"/>
    <property type="evidence" value="ECO:0000318"/>
    <property type="project" value="GO_Central"/>
</dbReference>
<dbReference type="GO" id="GO:0030154">
    <property type="term" value="P:cell differentiation"/>
    <property type="evidence" value="ECO:0000318"/>
    <property type="project" value="GO_Central"/>
</dbReference>
<dbReference type="GO" id="GO:0090597">
    <property type="term" value="P:nematode male tail mating organ morphogenesis"/>
    <property type="evidence" value="ECO:0000315"/>
    <property type="project" value="UniProtKB"/>
</dbReference>
<dbReference type="GO" id="GO:0045138">
    <property type="term" value="P:nematode male tail tip morphogenesis"/>
    <property type="evidence" value="ECO:0000315"/>
    <property type="project" value="WormBase"/>
</dbReference>
<dbReference type="GO" id="GO:0160094">
    <property type="term" value="P:nematode pharynx development"/>
    <property type="evidence" value="ECO:0000315"/>
    <property type="project" value="UniProtKB"/>
</dbReference>
<dbReference type="GO" id="GO:0030307">
    <property type="term" value="P:positive regulation of cell growth"/>
    <property type="evidence" value="ECO:0000315"/>
    <property type="project" value="UniProtKB"/>
</dbReference>
<dbReference type="GO" id="GO:0040018">
    <property type="term" value="P:positive regulation of multicellular organism growth"/>
    <property type="evidence" value="ECO:0000315"/>
    <property type="project" value="UniProtKB"/>
</dbReference>
<dbReference type="GO" id="GO:0110039">
    <property type="term" value="P:positive regulation of nematode male tail tip morphogenesis"/>
    <property type="evidence" value="ECO:0000315"/>
    <property type="project" value="UniProtKB"/>
</dbReference>
<dbReference type="GO" id="GO:0009791">
    <property type="term" value="P:post-embryonic development"/>
    <property type="evidence" value="ECO:0000316"/>
    <property type="project" value="UniProtKB"/>
</dbReference>
<dbReference type="GO" id="GO:0042661">
    <property type="term" value="P:regulation of mesodermal cell fate specification"/>
    <property type="evidence" value="ECO:0000316"/>
    <property type="project" value="UniProtKB"/>
</dbReference>
<dbReference type="GO" id="GO:0006357">
    <property type="term" value="P:regulation of transcription by RNA polymerase II"/>
    <property type="evidence" value="ECO:0000318"/>
    <property type="project" value="GO_Central"/>
</dbReference>
<dbReference type="GO" id="GO:0060395">
    <property type="term" value="P:SMAD protein signal transduction"/>
    <property type="evidence" value="ECO:0000318"/>
    <property type="project" value="GO_Central"/>
</dbReference>
<dbReference type="CDD" id="cd10495">
    <property type="entry name" value="MH2_R-SMAD"/>
    <property type="match status" value="1"/>
</dbReference>
<dbReference type="Gene3D" id="2.60.200.10">
    <property type="match status" value="1"/>
</dbReference>
<dbReference type="Gene3D" id="3.90.520.10">
    <property type="entry name" value="SMAD MH1 domain"/>
    <property type="match status" value="1"/>
</dbReference>
<dbReference type="InterPro" id="IPR013790">
    <property type="entry name" value="Dwarfin"/>
</dbReference>
<dbReference type="InterPro" id="IPR003619">
    <property type="entry name" value="MAD_homology1_Dwarfin-type"/>
</dbReference>
<dbReference type="InterPro" id="IPR013019">
    <property type="entry name" value="MAD_homology_MH1"/>
</dbReference>
<dbReference type="InterPro" id="IPR017855">
    <property type="entry name" value="SMAD-like_dom_sf"/>
</dbReference>
<dbReference type="InterPro" id="IPR001132">
    <property type="entry name" value="SMAD_dom_Dwarfin-type"/>
</dbReference>
<dbReference type="InterPro" id="IPR008984">
    <property type="entry name" value="SMAD_FHA_dom_sf"/>
</dbReference>
<dbReference type="InterPro" id="IPR036578">
    <property type="entry name" value="SMAD_MH1_sf"/>
</dbReference>
<dbReference type="PANTHER" id="PTHR13703:SF61">
    <property type="entry name" value="PROTEIN MOTHERS AGAINST DPP"/>
    <property type="match status" value="1"/>
</dbReference>
<dbReference type="PANTHER" id="PTHR13703">
    <property type="entry name" value="SMAD"/>
    <property type="match status" value="1"/>
</dbReference>
<dbReference type="Pfam" id="PF03165">
    <property type="entry name" value="MH1"/>
    <property type="match status" value="1"/>
</dbReference>
<dbReference type="Pfam" id="PF03166">
    <property type="entry name" value="MH2"/>
    <property type="match status" value="1"/>
</dbReference>
<dbReference type="SMART" id="SM00523">
    <property type="entry name" value="DWA"/>
    <property type="match status" value="1"/>
</dbReference>
<dbReference type="SMART" id="SM00524">
    <property type="entry name" value="DWB"/>
    <property type="match status" value="1"/>
</dbReference>
<dbReference type="SUPFAM" id="SSF56366">
    <property type="entry name" value="SMAD MH1 domain"/>
    <property type="match status" value="1"/>
</dbReference>
<dbReference type="SUPFAM" id="SSF49879">
    <property type="entry name" value="SMAD/FHA domain"/>
    <property type="match status" value="1"/>
</dbReference>
<dbReference type="PROSITE" id="PS51075">
    <property type="entry name" value="MH1"/>
    <property type="match status" value="1"/>
</dbReference>
<dbReference type="PROSITE" id="PS51076">
    <property type="entry name" value="MH2"/>
    <property type="match status" value="1"/>
</dbReference>
<feature type="chain" id="PRO_0000090879" description="Dwarfin sma-2">
    <location>
        <begin position="1"/>
        <end position="418"/>
    </location>
</feature>
<feature type="domain" description="MH1" evidence="2">
    <location>
        <begin position="8"/>
        <end position="134"/>
    </location>
</feature>
<feature type="domain" description="MH2" evidence="3">
    <location>
        <begin position="222"/>
        <end position="418"/>
    </location>
</feature>
<feature type="binding site" evidence="1">
    <location>
        <position position="62"/>
    </location>
    <ligand>
        <name>Zn(2+)</name>
        <dbReference type="ChEBI" id="CHEBI:29105"/>
    </ligand>
</feature>
<feature type="binding site" evidence="1">
    <location>
        <position position="107"/>
    </location>
    <ligand>
        <name>Zn(2+)</name>
        <dbReference type="ChEBI" id="CHEBI:29105"/>
    </ligand>
</feature>
<feature type="binding site" evidence="1">
    <location>
        <position position="119"/>
    </location>
    <ligand>
        <name>Zn(2+)</name>
        <dbReference type="ChEBI" id="CHEBI:29105"/>
    </ligand>
</feature>
<feature type="binding site" evidence="1">
    <location>
        <position position="124"/>
    </location>
    <ligand>
        <name>Zn(2+)</name>
        <dbReference type="ChEBI" id="CHEBI:29105"/>
    </ligand>
</feature>
<comment type="function">
    <text evidence="4">Involved in TGF-beta pathway. Plays a role in male tail tip morphogenesis (PubMed:21408209).</text>
</comment>
<comment type="subcellular location">
    <subcellularLocation>
        <location>Cytoplasm</location>
    </subcellularLocation>
    <subcellularLocation>
        <location evidence="5">Nucleus</location>
    </subcellularLocation>
</comment>
<comment type="disruption phenotype">
    <text evidence="4">RNAi-mediated knockdown enhances tail tip morphogenesis resulting in retention of the pointed larval tail tip in adult males (also known as the Lep phenotype) of sma-3 e491 mutants.</text>
</comment>
<comment type="similarity">
    <text evidence="5">Belongs to the dwarfin/SMAD family.</text>
</comment>
<name>SMA2_CAEEL</name>
<gene>
    <name evidence="6" type="primary">sma-2</name>
    <name evidence="6" type="synonym">cem-1</name>
    <name evidence="6" type="ORF">ZK370.2</name>
</gene>
<proteinExistence type="evidence at transcript level"/>
<sequence>MINFDGIKKITERLKWKQGDEDENWAKKAIDNLMKKLIKHNKQALENLEFALRCQGQQKTECVTIPRSLDGRLQISHRKALPHVIYCRVYRWPDLQSHHELKAIEDCRFCYESGQKDICINPYHYKRVHATGVLPPVLVPRYSEKPPQEVPPTLAKFQLMEMSGSRMPQNVNMANVNFTANQFHQYNPNGIEEMDTSQKFDIPPGVPTCLVPFDKVWEEQFWATVSYYELNTRVGEQVKVSSTTITIDGFTDPCINGSKISLGLFSNVNRNATIENTRRHIGNGVKLTYVRSNGSLFAQCESDSAIFVQSSNCNYINGFHSTTVVKIANKCSLKIFDMEIFRQLLEDCSRRGFDASFDLQKMTFIRMSFVKGWGAEYQRQDVTSTPCWIEIHLHAPLAWLDRVLSTMGPTPRPISSIS</sequence>
<protein>
    <recommendedName>
        <fullName>Dwarfin sma-2</fullName>
    </recommendedName>
    <alternativeName>
        <fullName>MAD protein homolog 1</fullName>
    </alternativeName>
</protein>
<organism>
    <name type="scientific">Caenorhabditis elegans</name>
    <dbReference type="NCBI Taxonomy" id="6239"/>
    <lineage>
        <taxon>Eukaryota</taxon>
        <taxon>Metazoa</taxon>
        <taxon>Ecdysozoa</taxon>
        <taxon>Nematoda</taxon>
        <taxon>Chromadorea</taxon>
        <taxon>Rhabditida</taxon>
        <taxon>Rhabditina</taxon>
        <taxon>Rhabditomorpha</taxon>
        <taxon>Rhabditoidea</taxon>
        <taxon>Rhabditidae</taxon>
        <taxon>Peloderinae</taxon>
        <taxon>Caenorhabditis</taxon>
    </lineage>
</organism>
<keyword id="KW-0963">Cytoplasm</keyword>
<keyword id="KW-0238">DNA-binding</keyword>
<keyword id="KW-0479">Metal-binding</keyword>
<keyword id="KW-0539">Nucleus</keyword>
<keyword id="KW-1185">Reference proteome</keyword>
<keyword id="KW-0804">Transcription</keyword>
<keyword id="KW-0805">Transcription regulation</keyword>
<keyword id="KW-0862">Zinc</keyword>
<accession>Q02330</accession>
<accession>Q02329</accession>